<keyword id="KW-0488">Methylation</keyword>
<keyword id="KW-1185">Reference proteome</keyword>
<keyword id="KW-0687">Ribonucleoprotein</keyword>
<keyword id="KW-0689">Ribosomal protein</keyword>
<keyword id="KW-0694">RNA-binding</keyword>
<keyword id="KW-0699">rRNA-binding</keyword>
<name>RL3_MARMM</name>
<gene>
    <name evidence="1" type="primary">rplC</name>
    <name type="ordered locus">Mmar10_1795</name>
</gene>
<reference key="1">
    <citation type="submission" date="2006-08" db="EMBL/GenBank/DDBJ databases">
        <title>Complete sequence of Maricaulis maris MCS10.</title>
        <authorList>
            <consortium name="US DOE Joint Genome Institute"/>
            <person name="Copeland A."/>
            <person name="Lucas S."/>
            <person name="Lapidus A."/>
            <person name="Barry K."/>
            <person name="Detter J.C."/>
            <person name="Glavina del Rio T."/>
            <person name="Hammon N."/>
            <person name="Israni S."/>
            <person name="Dalin E."/>
            <person name="Tice H."/>
            <person name="Pitluck S."/>
            <person name="Saunders E."/>
            <person name="Brettin T."/>
            <person name="Bruce D."/>
            <person name="Han C."/>
            <person name="Tapia R."/>
            <person name="Gilna P."/>
            <person name="Schmutz J."/>
            <person name="Larimer F."/>
            <person name="Land M."/>
            <person name="Hauser L."/>
            <person name="Kyrpides N."/>
            <person name="Mikhailova N."/>
            <person name="Viollier P."/>
            <person name="Stephens C."/>
            <person name="Richardson P."/>
        </authorList>
    </citation>
    <scope>NUCLEOTIDE SEQUENCE [LARGE SCALE GENOMIC DNA]</scope>
    <source>
        <strain>MCS10</strain>
    </source>
</reference>
<accession>Q0ANQ0</accession>
<protein>
    <recommendedName>
        <fullName evidence="1">Large ribosomal subunit protein uL3</fullName>
    </recommendedName>
    <alternativeName>
        <fullName evidence="3">50S ribosomal protein L3</fullName>
    </alternativeName>
</protein>
<evidence type="ECO:0000255" key="1">
    <source>
        <dbReference type="HAMAP-Rule" id="MF_01325"/>
    </source>
</evidence>
<evidence type="ECO:0000256" key="2">
    <source>
        <dbReference type="SAM" id="MobiDB-lite"/>
    </source>
</evidence>
<evidence type="ECO:0000305" key="3"/>
<dbReference type="EMBL" id="CP000449">
    <property type="protein sequence ID" value="ABI66087.1"/>
    <property type="molecule type" value="Genomic_DNA"/>
</dbReference>
<dbReference type="RefSeq" id="WP_011643733.1">
    <property type="nucleotide sequence ID" value="NC_008347.1"/>
</dbReference>
<dbReference type="SMR" id="Q0ANQ0"/>
<dbReference type="STRING" id="394221.Mmar10_1795"/>
<dbReference type="KEGG" id="mmr:Mmar10_1795"/>
<dbReference type="eggNOG" id="COG0087">
    <property type="taxonomic scope" value="Bacteria"/>
</dbReference>
<dbReference type="HOGENOM" id="CLU_044142_2_0_5"/>
<dbReference type="OrthoDB" id="9806135at2"/>
<dbReference type="Proteomes" id="UP000001964">
    <property type="component" value="Chromosome"/>
</dbReference>
<dbReference type="GO" id="GO:0022625">
    <property type="term" value="C:cytosolic large ribosomal subunit"/>
    <property type="evidence" value="ECO:0007669"/>
    <property type="project" value="TreeGrafter"/>
</dbReference>
<dbReference type="GO" id="GO:0019843">
    <property type="term" value="F:rRNA binding"/>
    <property type="evidence" value="ECO:0007669"/>
    <property type="project" value="UniProtKB-UniRule"/>
</dbReference>
<dbReference type="GO" id="GO:0003735">
    <property type="term" value="F:structural constituent of ribosome"/>
    <property type="evidence" value="ECO:0007669"/>
    <property type="project" value="InterPro"/>
</dbReference>
<dbReference type="GO" id="GO:0006412">
    <property type="term" value="P:translation"/>
    <property type="evidence" value="ECO:0007669"/>
    <property type="project" value="UniProtKB-UniRule"/>
</dbReference>
<dbReference type="FunFam" id="2.40.30.10:FF:000004">
    <property type="entry name" value="50S ribosomal protein L3"/>
    <property type="match status" value="1"/>
</dbReference>
<dbReference type="FunFam" id="3.30.160.810:FF:000001">
    <property type="entry name" value="50S ribosomal protein L3"/>
    <property type="match status" value="1"/>
</dbReference>
<dbReference type="Gene3D" id="3.30.160.810">
    <property type="match status" value="1"/>
</dbReference>
<dbReference type="Gene3D" id="2.40.30.10">
    <property type="entry name" value="Translation factors"/>
    <property type="match status" value="1"/>
</dbReference>
<dbReference type="HAMAP" id="MF_01325_B">
    <property type="entry name" value="Ribosomal_uL3_B"/>
    <property type="match status" value="1"/>
</dbReference>
<dbReference type="InterPro" id="IPR000597">
    <property type="entry name" value="Ribosomal_uL3"/>
</dbReference>
<dbReference type="InterPro" id="IPR019927">
    <property type="entry name" value="Ribosomal_uL3_bac/org-type"/>
</dbReference>
<dbReference type="InterPro" id="IPR019926">
    <property type="entry name" value="Ribosomal_uL3_CS"/>
</dbReference>
<dbReference type="InterPro" id="IPR009000">
    <property type="entry name" value="Transl_B-barrel_sf"/>
</dbReference>
<dbReference type="NCBIfam" id="TIGR03625">
    <property type="entry name" value="L3_bact"/>
    <property type="match status" value="1"/>
</dbReference>
<dbReference type="PANTHER" id="PTHR11229">
    <property type="entry name" value="50S RIBOSOMAL PROTEIN L3"/>
    <property type="match status" value="1"/>
</dbReference>
<dbReference type="PANTHER" id="PTHR11229:SF16">
    <property type="entry name" value="LARGE RIBOSOMAL SUBUNIT PROTEIN UL3C"/>
    <property type="match status" value="1"/>
</dbReference>
<dbReference type="Pfam" id="PF00297">
    <property type="entry name" value="Ribosomal_L3"/>
    <property type="match status" value="1"/>
</dbReference>
<dbReference type="SUPFAM" id="SSF50447">
    <property type="entry name" value="Translation proteins"/>
    <property type="match status" value="1"/>
</dbReference>
<dbReference type="PROSITE" id="PS00474">
    <property type="entry name" value="RIBOSOMAL_L3"/>
    <property type="match status" value="1"/>
</dbReference>
<comment type="function">
    <text evidence="1">One of the primary rRNA binding proteins, it binds directly near the 3'-end of the 23S rRNA, where it nucleates assembly of the 50S subunit.</text>
</comment>
<comment type="subunit">
    <text evidence="1">Part of the 50S ribosomal subunit. Forms a cluster with proteins L14 and L19.</text>
</comment>
<comment type="PTM">
    <text evidence="1">Methylated by PrmB.</text>
</comment>
<comment type="similarity">
    <text evidence="1">Belongs to the universal ribosomal protein uL3 family.</text>
</comment>
<sequence length="268" mass="28229">MRQEDRRTGVVARKLGMTRIFAEDGSHVPCTVLHMDNVQVVSHKTADRDGYVALQLGAGEAKAKRTPKAMRGHFAKAKVAPKRKLVEFRVAEDALIEVGSELTADHFVPGQKVDVAGISIGKGFAGAMKRHGFGGLRATHGVSISHRSHGSTGQCQDPGKVFKGKKMAGHMGAVRVTTQNIEVVRVDVERGIVLVKGAVPGSAGGWVELRDAIKGHGGTELPLPGKFRTLDELNAPVTAEVVENEAAPADADNAAPEAAADGEEGTQA</sequence>
<proteinExistence type="inferred from homology"/>
<organism>
    <name type="scientific">Maricaulis maris (strain MCS10)</name>
    <name type="common">Caulobacter maris</name>
    <dbReference type="NCBI Taxonomy" id="394221"/>
    <lineage>
        <taxon>Bacteria</taxon>
        <taxon>Pseudomonadati</taxon>
        <taxon>Pseudomonadota</taxon>
        <taxon>Alphaproteobacteria</taxon>
        <taxon>Maricaulales</taxon>
        <taxon>Maricaulaceae</taxon>
        <taxon>Maricaulis</taxon>
    </lineage>
</organism>
<feature type="chain" id="PRO_1000067564" description="Large ribosomal subunit protein uL3">
    <location>
        <begin position="1"/>
        <end position="268"/>
    </location>
</feature>
<feature type="region of interest" description="Disordered" evidence="2">
    <location>
        <begin position="242"/>
        <end position="268"/>
    </location>
</feature>
<feature type="compositionally biased region" description="Low complexity" evidence="2">
    <location>
        <begin position="242"/>
        <end position="259"/>
    </location>
</feature>
<feature type="modified residue" description="N5-methylglutamine" evidence="1">
    <location>
        <position position="156"/>
    </location>
</feature>